<dbReference type="EC" id="1.1.1.262" evidence="1"/>
<dbReference type="EMBL" id="CP000449">
    <property type="protein sequence ID" value="ABI65515.1"/>
    <property type="molecule type" value="Genomic_DNA"/>
</dbReference>
<dbReference type="RefSeq" id="WP_011643162.1">
    <property type="nucleotide sequence ID" value="NC_008347.1"/>
</dbReference>
<dbReference type="SMR" id="Q0AQC2"/>
<dbReference type="STRING" id="394221.Mmar10_1222"/>
<dbReference type="KEGG" id="mmr:Mmar10_1222"/>
<dbReference type="eggNOG" id="COG1995">
    <property type="taxonomic scope" value="Bacteria"/>
</dbReference>
<dbReference type="HOGENOM" id="CLU_040168_2_0_5"/>
<dbReference type="OrthoDB" id="9801783at2"/>
<dbReference type="UniPathway" id="UPA00244">
    <property type="reaction ID" value="UER00312"/>
</dbReference>
<dbReference type="Proteomes" id="UP000001964">
    <property type="component" value="Chromosome"/>
</dbReference>
<dbReference type="GO" id="GO:0005737">
    <property type="term" value="C:cytoplasm"/>
    <property type="evidence" value="ECO:0007669"/>
    <property type="project" value="UniProtKB-SubCell"/>
</dbReference>
<dbReference type="GO" id="GO:0050570">
    <property type="term" value="F:4-hydroxythreonine-4-phosphate dehydrogenase activity"/>
    <property type="evidence" value="ECO:0007669"/>
    <property type="project" value="UniProtKB-UniRule"/>
</dbReference>
<dbReference type="GO" id="GO:0050897">
    <property type="term" value="F:cobalt ion binding"/>
    <property type="evidence" value="ECO:0007669"/>
    <property type="project" value="UniProtKB-UniRule"/>
</dbReference>
<dbReference type="GO" id="GO:0000287">
    <property type="term" value="F:magnesium ion binding"/>
    <property type="evidence" value="ECO:0007669"/>
    <property type="project" value="UniProtKB-UniRule"/>
</dbReference>
<dbReference type="GO" id="GO:0051287">
    <property type="term" value="F:NAD binding"/>
    <property type="evidence" value="ECO:0007669"/>
    <property type="project" value="InterPro"/>
</dbReference>
<dbReference type="GO" id="GO:0008270">
    <property type="term" value="F:zinc ion binding"/>
    <property type="evidence" value="ECO:0007669"/>
    <property type="project" value="UniProtKB-UniRule"/>
</dbReference>
<dbReference type="GO" id="GO:0042823">
    <property type="term" value="P:pyridoxal phosphate biosynthetic process"/>
    <property type="evidence" value="ECO:0007669"/>
    <property type="project" value="UniProtKB-UniRule"/>
</dbReference>
<dbReference type="GO" id="GO:0008615">
    <property type="term" value="P:pyridoxine biosynthetic process"/>
    <property type="evidence" value="ECO:0007669"/>
    <property type="project" value="UniProtKB-UniRule"/>
</dbReference>
<dbReference type="Gene3D" id="3.40.718.10">
    <property type="entry name" value="Isopropylmalate Dehydrogenase"/>
    <property type="match status" value="1"/>
</dbReference>
<dbReference type="HAMAP" id="MF_00536">
    <property type="entry name" value="PdxA"/>
    <property type="match status" value="1"/>
</dbReference>
<dbReference type="InterPro" id="IPR037510">
    <property type="entry name" value="PdxA"/>
</dbReference>
<dbReference type="InterPro" id="IPR005255">
    <property type="entry name" value="PdxA_fam"/>
</dbReference>
<dbReference type="NCBIfam" id="TIGR00557">
    <property type="entry name" value="pdxA"/>
    <property type="match status" value="1"/>
</dbReference>
<dbReference type="NCBIfam" id="NF003699">
    <property type="entry name" value="PRK05312.1"/>
    <property type="match status" value="1"/>
</dbReference>
<dbReference type="PANTHER" id="PTHR30004">
    <property type="entry name" value="4-HYDROXYTHREONINE-4-PHOSPHATE DEHYDROGENASE"/>
    <property type="match status" value="1"/>
</dbReference>
<dbReference type="PANTHER" id="PTHR30004:SF6">
    <property type="entry name" value="D-THREONATE 4-PHOSPHATE DEHYDROGENASE"/>
    <property type="match status" value="1"/>
</dbReference>
<dbReference type="Pfam" id="PF04166">
    <property type="entry name" value="PdxA"/>
    <property type="match status" value="1"/>
</dbReference>
<dbReference type="SUPFAM" id="SSF53659">
    <property type="entry name" value="Isocitrate/Isopropylmalate dehydrogenase-like"/>
    <property type="match status" value="1"/>
</dbReference>
<gene>
    <name evidence="1" type="primary">pdxA</name>
    <name type="ordered locus">Mmar10_1222</name>
</gene>
<sequence>MTQLSPVAVSMGDPAGIGPEIILKAWQSWRRRNGVPPLIALGDIDAFTATAQALGLPAPCPLPTPTREAAETLDGLPVFDVGVKIAAPVRPGQPDTANAACTKAAIETGVRLALDGQVSALVTAPIAKSVMYEAGFAFPGHTEFLAELCADHPVDGPKGPAMMLAGGGLRVVLVTIHEPLVRALSLITPQRVEATARITDAALRRDFGIARPRLALAGLNPHAGEGGALGDEEIDILDPLAARLRADGIDITDAQPPDTLFHAEARAGYDAAICLYHDQGLIPVKTLDFHGGVNITLGLPIVRTSPDHGTAFNIAGQGVARPDSLLAALEQAVKIAECRA</sequence>
<proteinExistence type="inferred from homology"/>
<reference key="1">
    <citation type="submission" date="2006-08" db="EMBL/GenBank/DDBJ databases">
        <title>Complete sequence of Maricaulis maris MCS10.</title>
        <authorList>
            <consortium name="US DOE Joint Genome Institute"/>
            <person name="Copeland A."/>
            <person name="Lucas S."/>
            <person name="Lapidus A."/>
            <person name="Barry K."/>
            <person name="Detter J.C."/>
            <person name="Glavina del Rio T."/>
            <person name="Hammon N."/>
            <person name="Israni S."/>
            <person name="Dalin E."/>
            <person name="Tice H."/>
            <person name="Pitluck S."/>
            <person name="Saunders E."/>
            <person name="Brettin T."/>
            <person name="Bruce D."/>
            <person name="Han C."/>
            <person name="Tapia R."/>
            <person name="Gilna P."/>
            <person name="Schmutz J."/>
            <person name="Larimer F."/>
            <person name="Land M."/>
            <person name="Hauser L."/>
            <person name="Kyrpides N."/>
            <person name="Mikhailova N."/>
            <person name="Viollier P."/>
            <person name="Stephens C."/>
            <person name="Richardson P."/>
        </authorList>
    </citation>
    <scope>NUCLEOTIDE SEQUENCE [LARGE SCALE GENOMIC DNA]</scope>
    <source>
        <strain>MCS10</strain>
    </source>
</reference>
<keyword id="KW-0170">Cobalt</keyword>
<keyword id="KW-0963">Cytoplasm</keyword>
<keyword id="KW-0460">Magnesium</keyword>
<keyword id="KW-0479">Metal-binding</keyword>
<keyword id="KW-0520">NAD</keyword>
<keyword id="KW-0521">NADP</keyword>
<keyword id="KW-0560">Oxidoreductase</keyword>
<keyword id="KW-0664">Pyridoxine biosynthesis</keyword>
<keyword id="KW-1185">Reference proteome</keyword>
<keyword id="KW-0862">Zinc</keyword>
<organism>
    <name type="scientific">Maricaulis maris (strain MCS10)</name>
    <name type="common">Caulobacter maris</name>
    <dbReference type="NCBI Taxonomy" id="394221"/>
    <lineage>
        <taxon>Bacteria</taxon>
        <taxon>Pseudomonadati</taxon>
        <taxon>Pseudomonadota</taxon>
        <taxon>Alphaproteobacteria</taxon>
        <taxon>Maricaulales</taxon>
        <taxon>Maricaulaceae</taxon>
        <taxon>Maricaulis</taxon>
    </lineage>
</organism>
<evidence type="ECO:0000255" key="1">
    <source>
        <dbReference type="HAMAP-Rule" id="MF_00536"/>
    </source>
</evidence>
<comment type="function">
    <text evidence="1">Catalyzes the NAD(P)-dependent oxidation of 4-(phosphooxy)-L-threonine (HTP) into 2-amino-3-oxo-4-(phosphooxy)butyric acid which spontaneously decarboxylates to form 3-amino-2-oxopropyl phosphate (AHAP).</text>
</comment>
<comment type="catalytic activity">
    <reaction evidence="1">
        <text>4-(phosphooxy)-L-threonine + NAD(+) = 3-amino-2-oxopropyl phosphate + CO2 + NADH</text>
        <dbReference type="Rhea" id="RHEA:32275"/>
        <dbReference type="ChEBI" id="CHEBI:16526"/>
        <dbReference type="ChEBI" id="CHEBI:57279"/>
        <dbReference type="ChEBI" id="CHEBI:57540"/>
        <dbReference type="ChEBI" id="CHEBI:57945"/>
        <dbReference type="ChEBI" id="CHEBI:58452"/>
        <dbReference type="EC" id="1.1.1.262"/>
    </reaction>
</comment>
<comment type="cofactor">
    <cofactor evidence="1">
        <name>Zn(2+)</name>
        <dbReference type="ChEBI" id="CHEBI:29105"/>
    </cofactor>
    <cofactor evidence="1">
        <name>Mg(2+)</name>
        <dbReference type="ChEBI" id="CHEBI:18420"/>
    </cofactor>
    <cofactor evidence="1">
        <name>Co(2+)</name>
        <dbReference type="ChEBI" id="CHEBI:48828"/>
    </cofactor>
    <text evidence="1">Binds 1 divalent metal cation per subunit. Can use ions such as Zn(2+), Mg(2+) or Co(2+).</text>
</comment>
<comment type="pathway">
    <text evidence="1">Cofactor biosynthesis; pyridoxine 5'-phosphate biosynthesis; pyridoxine 5'-phosphate from D-erythrose 4-phosphate: step 4/5.</text>
</comment>
<comment type="subunit">
    <text evidence="1">Homodimer.</text>
</comment>
<comment type="subcellular location">
    <subcellularLocation>
        <location evidence="1">Cytoplasm</location>
    </subcellularLocation>
</comment>
<comment type="miscellaneous">
    <text evidence="1">The active site is located at the dimer interface.</text>
</comment>
<comment type="similarity">
    <text evidence="1">Belongs to the PdxA family.</text>
</comment>
<accession>Q0AQC2</accession>
<protein>
    <recommendedName>
        <fullName evidence="1">4-hydroxythreonine-4-phosphate dehydrogenase</fullName>
        <ecNumber evidence="1">1.1.1.262</ecNumber>
    </recommendedName>
    <alternativeName>
        <fullName evidence="1">4-(phosphohydroxy)-L-threonine dehydrogenase</fullName>
    </alternativeName>
</protein>
<name>PDXA_MARMM</name>
<feature type="chain" id="PRO_1000081867" description="4-hydroxythreonine-4-phosphate dehydrogenase">
    <location>
        <begin position="1"/>
        <end position="340"/>
    </location>
</feature>
<feature type="binding site" evidence="1">
    <location>
        <position position="141"/>
    </location>
    <ligand>
        <name>substrate</name>
    </ligand>
</feature>
<feature type="binding site" evidence="1">
    <location>
        <position position="142"/>
    </location>
    <ligand>
        <name>substrate</name>
    </ligand>
</feature>
<feature type="binding site" evidence="1">
    <location>
        <position position="177"/>
    </location>
    <ligand>
        <name>a divalent metal cation</name>
        <dbReference type="ChEBI" id="CHEBI:60240"/>
        <note>ligand shared between dimeric partners</note>
    </ligand>
</feature>
<feature type="binding site" evidence="1">
    <location>
        <position position="222"/>
    </location>
    <ligand>
        <name>a divalent metal cation</name>
        <dbReference type="ChEBI" id="CHEBI:60240"/>
        <note>ligand shared between dimeric partners</note>
    </ligand>
</feature>
<feature type="binding site" evidence="1">
    <location>
        <position position="277"/>
    </location>
    <ligand>
        <name>a divalent metal cation</name>
        <dbReference type="ChEBI" id="CHEBI:60240"/>
        <note>ligand shared between dimeric partners</note>
    </ligand>
</feature>
<feature type="binding site" evidence="1">
    <location>
        <position position="285"/>
    </location>
    <ligand>
        <name>substrate</name>
    </ligand>
</feature>
<feature type="binding site" evidence="1">
    <location>
        <position position="294"/>
    </location>
    <ligand>
        <name>substrate</name>
    </ligand>
</feature>
<feature type="binding site" evidence="1">
    <location>
        <position position="303"/>
    </location>
    <ligand>
        <name>substrate</name>
    </ligand>
</feature>